<proteinExistence type="inferred from homology"/>
<feature type="chain" id="PRO_1000184716" description="ATP synthase subunit delta">
    <location>
        <begin position="1"/>
        <end position="174"/>
    </location>
</feature>
<protein>
    <recommendedName>
        <fullName evidence="1">ATP synthase subunit delta</fullName>
    </recommendedName>
    <alternativeName>
        <fullName evidence="1">ATP synthase F(1) sector subunit delta</fullName>
    </alternativeName>
    <alternativeName>
        <fullName evidence="1">F-type ATPase subunit delta</fullName>
        <shortName evidence="1">F-ATPase subunit delta</shortName>
    </alternativeName>
</protein>
<name>ATPD_FRATM</name>
<reference key="1">
    <citation type="journal article" date="2009" name="PLoS Pathog.">
        <title>Molecular evolutionary consequences of niche restriction in Francisella tularensis, a facultative intracellular pathogen.</title>
        <authorList>
            <person name="Larsson P."/>
            <person name="Elfsmark D."/>
            <person name="Svensson K."/>
            <person name="Wikstroem P."/>
            <person name="Forsman M."/>
            <person name="Brettin T."/>
            <person name="Keim P."/>
            <person name="Johansson A."/>
        </authorList>
    </citation>
    <scope>NUCLEOTIDE SEQUENCE [LARGE SCALE GENOMIC DNA]</scope>
    <source>
        <strain>FSC147</strain>
    </source>
</reference>
<organism>
    <name type="scientific">Francisella tularensis subsp. mediasiatica (strain FSC147)</name>
    <dbReference type="NCBI Taxonomy" id="441952"/>
    <lineage>
        <taxon>Bacteria</taxon>
        <taxon>Pseudomonadati</taxon>
        <taxon>Pseudomonadota</taxon>
        <taxon>Gammaproteobacteria</taxon>
        <taxon>Thiotrichales</taxon>
        <taxon>Francisellaceae</taxon>
        <taxon>Francisella</taxon>
    </lineage>
</organism>
<accession>B2SEX8</accession>
<comment type="function">
    <text evidence="1">F(1)F(0) ATP synthase produces ATP from ADP in the presence of a proton or sodium gradient. F-type ATPases consist of two structural domains, F(1) containing the extramembraneous catalytic core and F(0) containing the membrane proton channel, linked together by a central stalk and a peripheral stalk. During catalysis, ATP synthesis in the catalytic domain of F(1) is coupled via a rotary mechanism of the central stalk subunits to proton translocation.</text>
</comment>
<comment type="function">
    <text evidence="1">This protein is part of the stalk that links CF(0) to CF(1). It either transmits conformational changes from CF(0) to CF(1) or is implicated in proton conduction.</text>
</comment>
<comment type="subunit">
    <text evidence="1">F-type ATPases have 2 components, F(1) - the catalytic core - and F(0) - the membrane proton channel. F(1) has five subunits: alpha(3), beta(3), gamma(1), delta(1), epsilon(1). F(0) has three main subunits: a(1), b(2) and c(10-14). The alpha and beta chains form an alternating ring which encloses part of the gamma chain. F(1) is attached to F(0) by a central stalk formed by the gamma and epsilon chains, while a peripheral stalk is formed by the delta and b chains.</text>
</comment>
<comment type="subcellular location">
    <subcellularLocation>
        <location evidence="1">Cell inner membrane</location>
        <topology evidence="1">Peripheral membrane protein</topology>
    </subcellularLocation>
</comment>
<comment type="similarity">
    <text evidence="1">Belongs to the ATPase delta chain family.</text>
</comment>
<keyword id="KW-0066">ATP synthesis</keyword>
<keyword id="KW-0997">Cell inner membrane</keyword>
<keyword id="KW-1003">Cell membrane</keyword>
<keyword id="KW-0139">CF(1)</keyword>
<keyword id="KW-0375">Hydrogen ion transport</keyword>
<keyword id="KW-0406">Ion transport</keyword>
<keyword id="KW-0472">Membrane</keyword>
<keyword id="KW-0813">Transport</keyword>
<dbReference type="EMBL" id="CP000915">
    <property type="protein sequence ID" value="ACD30223.1"/>
    <property type="molecule type" value="Genomic_DNA"/>
</dbReference>
<dbReference type="SMR" id="B2SEX8"/>
<dbReference type="KEGG" id="ftm:FTM_0125"/>
<dbReference type="HOGENOM" id="CLU_085114_3_0_6"/>
<dbReference type="GO" id="GO:0005886">
    <property type="term" value="C:plasma membrane"/>
    <property type="evidence" value="ECO:0007669"/>
    <property type="project" value="UniProtKB-SubCell"/>
</dbReference>
<dbReference type="GO" id="GO:0045259">
    <property type="term" value="C:proton-transporting ATP synthase complex"/>
    <property type="evidence" value="ECO:0007669"/>
    <property type="project" value="UniProtKB-KW"/>
</dbReference>
<dbReference type="GO" id="GO:0046933">
    <property type="term" value="F:proton-transporting ATP synthase activity, rotational mechanism"/>
    <property type="evidence" value="ECO:0007669"/>
    <property type="project" value="UniProtKB-UniRule"/>
</dbReference>
<dbReference type="Gene3D" id="1.10.520.20">
    <property type="entry name" value="N-terminal domain of the delta subunit of the F1F0-ATP synthase"/>
    <property type="match status" value="1"/>
</dbReference>
<dbReference type="HAMAP" id="MF_01416">
    <property type="entry name" value="ATP_synth_delta_bact"/>
    <property type="match status" value="1"/>
</dbReference>
<dbReference type="InterPro" id="IPR026015">
    <property type="entry name" value="ATP_synth_OSCP/delta_N_sf"/>
</dbReference>
<dbReference type="InterPro" id="IPR020781">
    <property type="entry name" value="ATPase_OSCP/d_CS"/>
</dbReference>
<dbReference type="InterPro" id="IPR000711">
    <property type="entry name" value="ATPase_OSCP/dsu"/>
</dbReference>
<dbReference type="NCBIfam" id="TIGR01145">
    <property type="entry name" value="ATP_synt_delta"/>
    <property type="match status" value="1"/>
</dbReference>
<dbReference type="NCBIfam" id="NF004402">
    <property type="entry name" value="PRK05758.2-2"/>
    <property type="match status" value="1"/>
</dbReference>
<dbReference type="PANTHER" id="PTHR11910">
    <property type="entry name" value="ATP SYNTHASE DELTA CHAIN"/>
    <property type="match status" value="1"/>
</dbReference>
<dbReference type="Pfam" id="PF00213">
    <property type="entry name" value="OSCP"/>
    <property type="match status" value="1"/>
</dbReference>
<dbReference type="PRINTS" id="PR00125">
    <property type="entry name" value="ATPASEDELTA"/>
</dbReference>
<dbReference type="SUPFAM" id="SSF47928">
    <property type="entry name" value="N-terminal domain of the delta subunit of the F1F0-ATP synthase"/>
    <property type="match status" value="1"/>
</dbReference>
<dbReference type="PROSITE" id="PS00389">
    <property type="entry name" value="ATPASE_DELTA"/>
    <property type="match status" value="1"/>
</dbReference>
<evidence type="ECO:0000255" key="1">
    <source>
        <dbReference type="HAMAP-Rule" id="MF_01416"/>
    </source>
</evidence>
<sequence>MTNISVIAKPYAKAAFEFANEHNLLQQWSKLLQTFSELIKDKSVAAIVSSPTISQIEVVDALKKQLDENFFNFLALIAENKKMLIMPEIADQFESIKKIHNNVRVADVTLAYATDKNILDSLKTSLEKKFGCTIDMHINIDPAIIGGAVVKVGDTVIDSSVSGHLEKLKSILLS</sequence>
<gene>
    <name evidence="1" type="primary">atpH</name>
    <name type="ordered locus">FTM_0125</name>
</gene>